<comment type="function">
    <text evidence="2">Cell wall formation.</text>
</comment>
<comment type="catalytic activity">
    <reaction evidence="2">
        <text>2 D-alanine + ATP = D-alanyl-D-alanine + ADP + phosphate + H(+)</text>
        <dbReference type="Rhea" id="RHEA:11224"/>
        <dbReference type="ChEBI" id="CHEBI:15378"/>
        <dbReference type="ChEBI" id="CHEBI:30616"/>
        <dbReference type="ChEBI" id="CHEBI:43474"/>
        <dbReference type="ChEBI" id="CHEBI:57416"/>
        <dbReference type="ChEBI" id="CHEBI:57822"/>
        <dbReference type="ChEBI" id="CHEBI:456216"/>
        <dbReference type="EC" id="6.3.2.4"/>
    </reaction>
</comment>
<comment type="cofactor">
    <cofactor evidence="1">
        <name>Mg(2+)</name>
        <dbReference type="ChEBI" id="CHEBI:18420"/>
    </cofactor>
    <cofactor evidence="1">
        <name>Mn(2+)</name>
        <dbReference type="ChEBI" id="CHEBI:29035"/>
    </cofactor>
    <text evidence="1">Binds 2 magnesium or manganese ions per subunit.</text>
</comment>
<comment type="pathway">
    <text evidence="2">Cell wall biogenesis; peptidoglycan biosynthesis.</text>
</comment>
<comment type="subcellular location">
    <subcellularLocation>
        <location evidence="2">Cytoplasm</location>
    </subcellularLocation>
</comment>
<comment type="similarity">
    <text evidence="2">Belongs to the D-alanine--D-alanine ligase family.</text>
</comment>
<dbReference type="EC" id="6.3.2.4" evidence="2"/>
<dbReference type="EMBL" id="CP000111">
    <property type="protein sequence ID" value="ABB50462.1"/>
    <property type="molecule type" value="Genomic_DNA"/>
</dbReference>
<dbReference type="RefSeq" id="WP_011376948.1">
    <property type="nucleotide sequence ID" value="NC_007577.1"/>
</dbReference>
<dbReference type="SMR" id="Q319I3"/>
<dbReference type="STRING" id="74546.PMT9312_1402"/>
<dbReference type="KEGG" id="pmi:PMT9312_1402"/>
<dbReference type="eggNOG" id="COG1181">
    <property type="taxonomic scope" value="Bacteria"/>
</dbReference>
<dbReference type="HOGENOM" id="CLU_039268_0_0_3"/>
<dbReference type="OrthoDB" id="9813261at2"/>
<dbReference type="UniPathway" id="UPA00219"/>
<dbReference type="Proteomes" id="UP000002715">
    <property type="component" value="Chromosome"/>
</dbReference>
<dbReference type="GO" id="GO:0005829">
    <property type="term" value="C:cytosol"/>
    <property type="evidence" value="ECO:0007669"/>
    <property type="project" value="TreeGrafter"/>
</dbReference>
<dbReference type="GO" id="GO:0005524">
    <property type="term" value="F:ATP binding"/>
    <property type="evidence" value="ECO:0007669"/>
    <property type="project" value="UniProtKB-KW"/>
</dbReference>
<dbReference type="GO" id="GO:0008716">
    <property type="term" value="F:D-alanine-D-alanine ligase activity"/>
    <property type="evidence" value="ECO:0007669"/>
    <property type="project" value="UniProtKB-UniRule"/>
</dbReference>
<dbReference type="GO" id="GO:0046872">
    <property type="term" value="F:metal ion binding"/>
    <property type="evidence" value="ECO:0007669"/>
    <property type="project" value="UniProtKB-KW"/>
</dbReference>
<dbReference type="GO" id="GO:0071555">
    <property type="term" value="P:cell wall organization"/>
    <property type="evidence" value="ECO:0007669"/>
    <property type="project" value="UniProtKB-KW"/>
</dbReference>
<dbReference type="GO" id="GO:0009252">
    <property type="term" value="P:peptidoglycan biosynthetic process"/>
    <property type="evidence" value="ECO:0007669"/>
    <property type="project" value="UniProtKB-UniRule"/>
</dbReference>
<dbReference type="GO" id="GO:0008360">
    <property type="term" value="P:regulation of cell shape"/>
    <property type="evidence" value="ECO:0007669"/>
    <property type="project" value="UniProtKB-KW"/>
</dbReference>
<dbReference type="FunFam" id="3.30.470.20:FF:000008">
    <property type="entry name" value="D-alanine--D-alanine ligase"/>
    <property type="match status" value="1"/>
</dbReference>
<dbReference type="Gene3D" id="3.40.50.20">
    <property type="match status" value="1"/>
</dbReference>
<dbReference type="Gene3D" id="3.30.1490.20">
    <property type="entry name" value="ATP-grasp fold, A domain"/>
    <property type="match status" value="1"/>
</dbReference>
<dbReference type="Gene3D" id="3.30.470.20">
    <property type="entry name" value="ATP-grasp fold, B domain"/>
    <property type="match status" value="1"/>
</dbReference>
<dbReference type="HAMAP" id="MF_00047">
    <property type="entry name" value="Dala_Dala_lig"/>
    <property type="match status" value="1"/>
</dbReference>
<dbReference type="InterPro" id="IPR011761">
    <property type="entry name" value="ATP-grasp"/>
</dbReference>
<dbReference type="InterPro" id="IPR013815">
    <property type="entry name" value="ATP_grasp_subdomain_1"/>
</dbReference>
<dbReference type="InterPro" id="IPR000291">
    <property type="entry name" value="D-Ala_lig_Van_CS"/>
</dbReference>
<dbReference type="InterPro" id="IPR005905">
    <property type="entry name" value="D_ala_D_ala"/>
</dbReference>
<dbReference type="InterPro" id="IPR011095">
    <property type="entry name" value="Dala_Dala_lig_C"/>
</dbReference>
<dbReference type="InterPro" id="IPR011127">
    <property type="entry name" value="Dala_Dala_lig_N"/>
</dbReference>
<dbReference type="InterPro" id="IPR016185">
    <property type="entry name" value="PreATP-grasp_dom_sf"/>
</dbReference>
<dbReference type="NCBIfam" id="TIGR01205">
    <property type="entry name" value="D_ala_D_alaTIGR"/>
    <property type="match status" value="1"/>
</dbReference>
<dbReference type="NCBIfam" id="NF002528">
    <property type="entry name" value="PRK01966.1-4"/>
    <property type="match status" value="1"/>
</dbReference>
<dbReference type="PANTHER" id="PTHR23132">
    <property type="entry name" value="D-ALANINE--D-ALANINE LIGASE"/>
    <property type="match status" value="1"/>
</dbReference>
<dbReference type="PANTHER" id="PTHR23132:SF25">
    <property type="entry name" value="D-ALANINE--D-ALANINE LIGASE A"/>
    <property type="match status" value="1"/>
</dbReference>
<dbReference type="Pfam" id="PF07478">
    <property type="entry name" value="Dala_Dala_lig_C"/>
    <property type="match status" value="1"/>
</dbReference>
<dbReference type="Pfam" id="PF01820">
    <property type="entry name" value="Dala_Dala_lig_N"/>
    <property type="match status" value="1"/>
</dbReference>
<dbReference type="PIRSF" id="PIRSF039102">
    <property type="entry name" value="Ddl/VanB"/>
    <property type="match status" value="1"/>
</dbReference>
<dbReference type="SUPFAM" id="SSF56059">
    <property type="entry name" value="Glutathione synthetase ATP-binding domain-like"/>
    <property type="match status" value="1"/>
</dbReference>
<dbReference type="SUPFAM" id="SSF52440">
    <property type="entry name" value="PreATP-grasp domain"/>
    <property type="match status" value="1"/>
</dbReference>
<dbReference type="PROSITE" id="PS50975">
    <property type="entry name" value="ATP_GRASP"/>
    <property type="match status" value="1"/>
</dbReference>
<dbReference type="PROSITE" id="PS00843">
    <property type="entry name" value="DALA_DALA_LIGASE_1"/>
    <property type="match status" value="1"/>
</dbReference>
<dbReference type="PROSITE" id="PS00844">
    <property type="entry name" value="DALA_DALA_LIGASE_2"/>
    <property type="match status" value="1"/>
</dbReference>
<sequence>MIEEKKKCIGLIFGGYSNEHDVSISSAKTVFNAFNSEINKQRFNVKAFYINKYGDWIDNDISVKILIGEIEHKKTKKQELFNQKKINFLDGIEFQNIDIWFPLLHGFNGEDGSIHGLLKFTNKPLVGCGILGSALGMDKILMKTIFSNLKIPQVNYLVIQNEDLNNLEVKNKLIIEIIKKLNFPVFVKPSNSGSSLGISKVINKSALLKALEKAWEIDARILVEEGLETREIECGIIGNSELLTSEIGEVEYGSDWYDYDSKYNSNNKITIPAKIDSKITKQIKEIAIQSCRTLNIFGFARVDFFLEKSSNKIFLNEINTIPGFTKKSMFPMLWEASGLNIEQLVAKLVDISLDL</sequence>
<proteinExistence type="inferred from homology"/>
<reference key="1">
    <citation type="journal article" date="2006" name="Science">
        <title>Genomic islands and the ecology and evolution of Prochlorococcus.</title>
        <authorList>
            <person name="Coleman M.L."/>
            <person name="Sullivan M.B."/>
            <person name="Martiny A.C."/>
            <person name="Steglich C."/>
            <person name="Barry K."/>
            <person name="Delong E.F."/>
            <person name="Chisholm S.W."/>
        </authorList>
    </citation>
    <scope>NUCLEOTIDE SEQUENCE [LARGE SCALE GENOMIC DNA]</scope>
    <source>
        <strain>MIT 9312</strain>
    </source>
</reference>
<keyword id="KW-0067">ATP-binding</keyword>
<keyword id="KW-0133">Cell shape</keyword>
<keyword id="KW-0961">Cell wall biogenesis/degradation</keyword>
<keyword id="KW-0963">Cytoplasm</keyword>
<keyword id="KW-0436">Ligase</keyword>
<keyword id="KW-0460">Magnesium</keyword>
<keyword id="KW-0464">Manganese</keyword>
<keyword id="KW-0479">Metal-binding</keyword>
<keyword id="KW-0547">Nucleotide-binding</keyword>
<keyword id="KW-0573">Peptidoglycan synthesis</keyword>
<feature type="chain" id="PRO_1000030482" description="D-alanine--D-alanine ligase">
    <location>
        <begin position="1"/>
        <end position="355"/>
    </location>
</feature>
<feature type="domain" description="ATP-grasp" evidence="2">
    <location>
        <begin position="143"/>
        <end position="350"/>
    </location>
</feature>
<feature type="binding site" evidence="2">
    <location>
        <begin position="178"/>
        <end position="233"/>
    </location>
    <ligand>
        <name>ATP</name>
        <dbReference type="ChEBI" id="CHEBI:30616"/>
    </ligand>
</feature>
<feature type="binding site" evidence="2">
    <location>
        <position position="303"/>
    </location>
    <ligand>
        <name>Mg(2+)</name>
        <dbReference type="ChEBI" id="CHEBI:18420"/>
        <label>1</label>
    </ligand>
</feature>
<feature type="binding site" evidence="2">
    <location>
        <position position="317"/>
    </location>
    <ligand>
        <name>Mg(2+)</name>
        <dbReference type="ChEBI" id="CHEBI:18420"/>
        <label>1</label>
    </ligand>
</feature>
<feature type="binding site" evidence="2">
    <location>
        <position position="317"/>
    </location>
    <ligand>
        <name>Mg(2+)</name>
        <dbReference type="ChEBI" id="CHEBI:18420"/>
        <label>2</label>
    </ligand>
</feature>
<feature type="binding site" evidence="2">
    <location>
        <position position="319"/>
    </location>
    <ligand>
        <name>Mg(2+)</name>
        <dbReference type="ChEBI" id="CHEBI:18420"/>
        <label>2</label>
    </ligand>
</feature>
<name>DDL_PROM9</name>
<organism>
    <name type="scientific">Prochlorococcus marinus (strain MIT 9312)</name>
    <dbReference type="NCBI Taxonomy" id="74546"/>
    <lineage>
        <taxon>Bacteria</taxon>
        <taxon>Bacillati</taxon>
        <taxon>Cyanobacteriota</taxon>
        <taxon>Cyanophyceae</taxon>
        <taxon>Synechococcales</taxon>
        <taxon>Prochlorococcaceae</taxon>
        <taxon>Prochlorococcus</taxon>
    </lineage>
</organism>
<gene>
    <name evidence="2" type="primary">ddl</name>
    <name type="ordered locus">PMT9312_1402</name>
</gene>
<evidence type="ECO:0000250" key="1"/>
<evidence type="ECO:0000255" key="2">
    <source>
        <dbReference type="HAMAP-Rule" id="MF_00047"/>
    </source>
</evidence>
<protein>
    <recommendedName>
        <fullName evidence="2">D-alanine--D-alanine ligase</fullName>
        <ecNumber evidence="2">6.3.2.4</ecNumber>
    </recommendedName>
    <alternativeName>
        <fullName evidence="2">D-Ala-D-Ala ligase</fullName>
    </alternativeName>
    <alternativeName>
        <fullName evidence="2">D-alanylalanine synthetase</fullName>
    </alternativeName>
</protein>
<accession>Q319I3</accession>